<proteinExistence type="evidence at protein level"/>
<feature type="chain" id="PRO_0000451484" description="(R)-mandelonitrile beta-glucosyltransferase">
    <location>
        <begin position="1"/>
        <end position="483"/>
    </location>
</feature>
<feature type="active site" description="Proton acceptor" evidence="1">
    <location>
        <position position="22"/>
    </location>
</feature>
<feature type="active site" description="Charge relay" evidence="1">
    <location>
        <position position="124"/>
    </location>
</feature>
<feature type="binding site" evidence="2">
    <location>
        <position position="22"/>
    </location>
    <ligand>
        <name>an anthocyanidin</name>
        <dbReference type="ChEBI" id="CHEBI:143576"/>
    </ligand>
</feature>
<feature type="binding site" evidence="1">
    <location>
        <position position="146"/>
    </location>
    <ligand>
        <name>UDP-alpha-D-glucose</name>
        <dbReference type="ChEBI" id="CHEBI:58885"/>
    </ligand>
</feature>
<feature type="binding site" evidence="1">
    <location>
        <position position="363"/>
    </location>
    <ligand>
        <name>UDP-alpha-D-glucose</name>
        <dbReference type="ChEBI" id="CHEBI:58885"/>
    </ligand>
</feature>
<feature type="binding site" evidence="1">
    <location>
        <position position="378"/>
    </location>
    <ligand>
        <name>UDP-alpha-D-glucose</name>
        <dbReference type="ChEBI" id="CHEBI:58885"/>
    </ligand>
</feature>
<feature type="binding site" evidence="1">
    <location>
        <position position="381"/>
    </location>
    <ligand>
        <name>UDP-alpha-D-glucose</name>
        <dbReference type="ChEBI" id="CHEBI:58885"/>
    </ligand>
</feature>
<feature type="binding site" evidence="1">
    <location>
        <position position="382"/>
    </location>
    <ligand>
        <name>UDP-alpha-D-glucose</name>
        <dbReference type="ChEBI" id="CHEBI:58885"/>
    </ligand>
</feature>
<feature type="binding site" evidence="1">
    <location>
        <position position="383"/>
    </location>
    <ligand>
        <name>UDP-alpha-D-glucose</name>
        <dbReference type="ChEBI" id="CHEBI:58885"/>
    </ligand>
</feature>
<feature type="binding site" evidence="1">
    <location>
        <position position="386"/>
    </location>
    <ligand>
        <name>UDP-alpha-D-glucose</name>
        <dbReference type="ChEBI" id="CHEBI:58885"/>
    </ligand>
</feature>
<feature type="binding site" evidence="2">
    <location>
        <position position="401"/>
    </location>
    <ligand>
        <name>an anthocyanidin</name>
        <dbReference type="ChEBI" id="CHEBI:143576"/>
    </ligand>
</feature>
<feature type="binding site" evidence="1">
    <location>
        <position position="402"/>
    </location>
    <ligand>
        <name>UDP-alpha-D-glucose</name>
        <dbReference type="ChEBI" id="CHEBI:58885"/>
    </ligand>
</feature>
<feature type="binding site" evidence="1">
    <location>
        <position position="403"/>
    </location>
    <ligand>
        <name>UDP-alpha-D-glucose</name>
        <dbReference type="ChEBI" id="CHEBI:58885"/>
    </ligand>
</feature>
<feature type="sequence conflict" description="In Ref. 1; ABV68925." ref="1">
    <original>T</original>
    <variation>S</variation>
    <location>
        <position position="127"/>
    </location>
</feature>
<feature type="sequence conflict" description="In Ref. 1; ABV68925." ref="1">
    <original>M</original>
    <variation>K</variation>
    <location>
        <position position="454"/>
    </location>
</feature>
<feature type="sequence conflict" description="In Ref. 1; ABV68925." ref="1">
    <original>A</original>
    <variation>S</variation>
    <location>
        <position position="461"/>
    </location>
</feature>
<organism>
    <name type="scientific">Prunus dulcis</name>
    <name type="common">Almond</name>
    <name type="synonym">Amygdalus dulcis</name>
    <dbReference type="NCBI Taxonomy" id="3755"/>
    <lineage>
        <taxon>Eukaryota</taxon>
        <taxon>Viridiplantae</taxon>
        <taxon>Streptophyta</taxon>
        <taxon>Embryophyta</taxon>
        <taxon>Tracheophyta</taxon>
        <taxon>Spermatophyta</taxon>
        <taxon>Magnoliopsida</taxon>
        <taxon>eudicotyledons</taxon>
        <taxon>Gunneridae</taxon>
        <taxon>Pentapetalae</taxon>
        <taxon>rosids</taxon>
        <taxon>fabids</taxon>
        <taxon>Rosales</taxon>
        <taxon>Rosaceae</taxon>
        <taxon>Amygdaloideae</taxon>
        <taxon>Amygdaleae</taxon>
        <taxon>Prunus</taxon>
    </lineage>
</organism>
<dbReference type="EC" id="2.4.1.354" evidence="3"/>
<dbReference type="EMBL" id="EU015987">
    <property type="protein sequence ID" value="ABV68925.1"/>
    <property type="molecule type" value="mRNA"/>
</dbReference>
<dbReference type="EMBL" id="CABIKO010000198">
    <property type="protein sequence ID" value="VVA30855.1"/>
    <property type="molecule type" value="Genomic_DNA"/>
</dbReference>
<dbReference type="SMR" id="B2XBQ5"/>
<dbReference type="FunCoup" id="B2XBQ5">
    <property type="interactions" value="350"/>
</dbReference>
<dbReference type="CAZy" id="GT1">
    <property type="family name" value="Glycosyltransferase Family 1"/>
</dbReference>
<dbReference type="EnsemblPlants" id="VVA30855">
    <property type="protein sequence ID" value="VVA30855"/>
    <property type="gene ID" value="Prudul26B036004"/>
</dbReference>
<dbReference type="Gramene" id="VVA30855">
    <property type="protein sequence ID" value="VVA30855"/>
    <property type="gene ID" value="Prudul26B036004"/>
</dbReference>
<dbReference type="KEGG" id="ag:ABV68925"/>
<dbReference type="InParanoid" id="B2XBQ5"/>
<dbReference type="OMA" id="WAENTEC"/>
<dbReference type="BioCyc" id="MetaCyc:MONOMER-20308"/>
<dbReference type="Proteomes" id="UP000327085">
    <property type="component" value="Chromosome 1"/>
</dbReference>
<dbReference type="GO" id="GO:0080043">
    <property type="term" value="F:quercetin 3-O-glucosyltransferase activity"/>
    <property type="evidence" value="ECO:0007669"/>
    <property type="project" value="TreeGrafter"/>
</dbReference>
<dbReference type="GO" id="GO:0080044">
    <property type="term" value="F:quercetin 7-O-glucosyltransferase activity"/>
    <property type="evidence" value="ECO:0007669"/>
    <property type="project" value="TreeGrafter"/>
</dbReference>
<dbReference type="GO" id="GO:0008194">
    <property type="term" value="F:UDP-glycosyltransferase activity"/>
    <property type="evidence" value="ECO:0000314"/>
    <property type="project" value="UniProtKB"/>
</dbReference>
<dbReference type="CDD" id="cd03784">
    <property type="entry name" value="GT1_Gtf-like"/>
    <property type="match status" value="1"/>
</dbReference>
<dbReference type="FunFam" id="3.40.50.2000:FF:000027">
    <property type="entry name" value="Glycosyltransferase"/>
    <property type="match status" value="1"/>
</dbReference>
<dbReference type="FunFam" id="3.40.50.2000:FF:000055">
    <property type="entry name" value="Glycosyltransferase"/>
    <property type="match status" value="1"/>
</dbReference>
<dbReference type="Gene3D" id="3.40.50.2000">
    <property type="entry name" value="Glycogen Phosphorylase B"/>
    <property type="match status" value="2"/>
</dbReference>
<dbReference type="InterPro" id="IPR002213">
    <property type="entry name" value="UDP_glucos_trans"/>
</dbReference>
<dbReference type="InterPro" id="IPR035595">
    <property type="entry name" value="UDP_glycos_trans_CS"/>
</dbReference>
<dbReference type="PANTHER" id="PTHR11926">
    <property type="entry name" value="GLUCOSYL/GLUCURONOSYL TRANSFERASES"/>
    <property type="match status" value="1"/>
</dbReference>
<dbReference type="PANTHER" id="PTHR11926:SF774">
    <property type="entry name" value="UDP-GLYCOSYLTRANSFERASE 85A1-RELATED"/>
    <property type="match status" value="1"/>
</dbReference>
<dbReference type="Pfam" id="PF00201">
    <property type="entry name" value="UDPGT"/>
    <property type="match status" value="1"/>
</dbReference>
<dbReference type="SUPFAM" id="SSF53756">
    <property type="entry name" value="UDP-Glycosyltransferase/glycogen phosphorylase"/>
    <property type="match status" value="1"/>
</dbReference>
<dbReference type="PROSITE" id="PS00375">
    <property type="entry name" value="UDPGT"/>
    <property type="match status" value="1"/>
</dbReference>
<keyword id="KW-0328">Glycosyltransferase</keyword>
<keyword id="KW-1185">Reference proteome</keyword>
<keyword id="KW-0808">Transferase</keyword>
<protein>
    <recommendedName>
        <fullName evidence="5">(R)-mandelonitrile beta-glucosyltransferase</fullName>
        <ecNumber evidence="3">2.4.1.354</ecNumber>
    </recommendedName>
    <alternativeName>
        <fullName evidence="4">UDP-glycosyltransferase 85A19</fullName>
    </alternativeName>
</protein>
<accession>B2XBQ5</accession>
<accession>A0A5E4FTL8</accession>
<comment type="function">
    <text evidence="3">Involved in the biosynthesis of the cyanogenic glycoside (R)-prunasin, a precursor of (R)-amygdalin, which at high concentrations is associated with intense bitterness in kernels of almond (PubMed:32688778). Stereo-selectively glucosylates (R)-mandelonitrile to produce (R)-prunasin (PubMed:32688778).</text>
</comment>
<comment type="catalytic activity">
    <reaction evidence="3">
        <text>(R)-mandelonitrile + UDP-alpha-D-glucose = (R)-prunasin + UDP + H(+)</text>
        <dbReference type="Rhea" id="RHEA:55984"/>
        <dbReference type="ChEBI" id="CHEBI:15378"/>
        <dbReference type="ChEBI" id="CHEBI:17396"/>
        <dbReference type="ChEBI" id="CHEBI:18450"/>
        <dbReference type="ChEBI" id="CHEBI:58223"/>
        <dbReference type="ChEBI" id="CHEBI:58885"/>
        <dbReference type="EC" id="2.4.1.354"/>
    </reaction>
    <physiologicalReaction direction="left-to-right" evidence="5">
        <dbReference type="Rhea" id="RHEA:55985"/>
    </physiologicalReaction>
</comment>
<comment type="similarity">
    <text evidence="5">Belongs to the UDP-glycosyltransferase family.</text>
</comment>
<reference key="1">
    <citation type="journal article" date="2008" name="Funct. Plant Biol.">
        <title>A seed coat cyanohydrin glucosyltransferase is associated with bitterness in almond (Prunus dulcis) kernels.</title>
        <authorList>
            <person name="Franks T.K."/>
            <person name="Yadollahi A."/>
            <person name="Wirthensohn M.G."/>
            <person name="Guerin J.R."/>
            <person name="Kaiser B.N."/>
            <person name="Sedgley M."/>
            <person name="Ford C.M."/>
        </authorList>
    </citation>
    <scope>NUCLEOTIDE SEQUENCE [MRNA]</scope>
    <scope>FUNCTION</scope>
    <scope>CATALYTIC ACTIVITY</scope>
    <source>
        <tissue>Leaf</tissue>
    </source>
</reference>
<reference key="2">
    <citation type="journal article" date="2020" name="Plant J.">
        <title>Transposons played a major role in the diversification between the closely related almond and peach genomes: results from the almond genome sequence.</title>
        <authorList>
            <person name="Alioto T."/>
            <person name="Alexiou K.G."/>
            <person name="Bardil A."/>
            <person name="Barteri F."/>
            <person name="Castanera R."/>
            <person name="Cruz F."/>
            <person name="Dhingra A."/>
            <person name="Duval H."/>
            <person name="Fernandez I Marti A."/>
            <person name="Frias L."/>
            <person name="Galan B."/>
            <person name="Garcia J.L."/>
            <person name="Howad W."/>
            <person name="Gomez-Garrido J."/>
            <person name="Gut M."/>
            <person name="Julca I."/>
            <person name="Morata J."/>
            <person name="Puigdomenech P."/>
            <person name="Ribeca P."/>
            <person name="Rubio Cabetas M.J."/>
            <person name="Vlasova A."/>
            <person name="Wirthensohn M."/>
            <person name="Garcia-Mas J."/>
            <person name="Gabaldon T."/>
            <person name="Casacuberta J.M."/>
            <person name="Arus P."/>
        </authorList>
    </citation>
    <scope>NUCLEOTIDE SEQUENCE [LARGE SCALE GENOMIC DNA]</scope>
    <source>
        <strain>cv. Texas</strain>
    </source>
</reference>
<name>85A19_PRUDU</name>
<sequence length="483" mass="53697">MSPVASKEKPHAVFVPFPAQGHINPMLQLAKLLNYKGFHITFVNTEFNHKRMLESQGSHALDGLPSFRFETIPDGLPPADADARRNLPLVCDSTSKTCLAPFEALLTKLNSSPDSPPVTCIVADGVTSFTLDAAEHFGIPEVLFWTTSACGLMGYVQYYRLIEKGLTPFKDAKDFANGYLDTEIDWIPGMKDVRLKDMPSFIRTTDPNDIMLHYMVSETERSKKASAIILNTFDALEQEVVDALSTLLPPIYSIGPLQLPYSEIPSEYNDLKAIGSNLWAENTECLNWLDTKEPNSVVYVNFGSTTVMTNEQLVEFSWGLANSKKPFLWIIRPGLVAGETAVVPPEFLEETKERGMLASWCPQEQVLLHSAIGGFLTHSGWNSTLEALCGGVPLICWPFFAEQQTNVRYSCTQWGIGIEIDGEVKRDYIDGLVRTLMDGEEGKKMRKKALEWKMLAEDATAPKGSSYLALENVVSKVLLSPRD</sequence>
<evidence type="ECO:0000250" key="1">
    <source>
        <dbReference type="UniProtKB" id="A0A0A1HA03"/>
    </source>
</evidence>
<evidence type="ECO:0000250" key="2">
    <source>
        <dbReference type="UniProtKB" id="P51094"/>
    </source>
</evidence>
<evidence type="ECO:0000269" key="3">
    <source>
    </source>
</evidence>
<evidence type="ECO:0000303" key="4">
    <source>
    </source>
</evidence>
<evidence type="ECO:0000305" key="5"/>
<evidence type="ECO:0000312" key="6">
    <source>
        <dbReference type="EMBL" id="VVA30855.1"/>
    </source>
</evidence>
<gene>
    <name evidence="4" type="primary">UGT85A19</name>
    <name evidence="6" type="ORF">ALMOND_2B036004</name>
</gene>